<name>Y144_RICCN</name>
<reference key="1">
    <citation type="journal article" date="2001" name="Science">
        <title>Mechanisms of evolution in Rickettsia conorii and R. prowazekii.</title>
        <authorList>
            <person name="Ogata H."/>
            <person name="Audic S."/>
            <person name="Renesto-Audiffren P."/>
            <person name="Fournier P.-E."/>
            <person name="Barbe V."/>
            <person name="Samson D."/>
            <person name="Roux V."/>
            <person name="Cossart P."/>
            <person name="Weissenbach J."/>
            <person name="Claverie J.-M."/>
            <person name="Raoult D."/>
        </authorList>
    </citation>
    <scope>NUCLEOTIDE SEQUENCE [LARGE SCALE GENOMIC DNA]</scope>
    <source>
        <strain>ATCC VR-613 / Malish 7</strain>
    </source>
</reference>
<keyword id="KW-1003">Cell membrane</keyword>
<keyword id="KW-0472">Membrane</keyword>
<keyword id="KW-0732">Signal</keyword>
<keyword id="KW-0812">Transmembrane</keyword>
<keyword id="KW-1133">Transmembrane helix</keyword>
<protein>
    <recommendedName>
        <fullName>Uncharacterized protein RC0144</fullName>
    </recommendedName>
</protein>
<comment type="subcellular location">
    <subcellularLocation>
        <location evidence="3">Cell membrane</location>
        <topology evidence="3">Multi-pass membrane protein</topology>
    </subcellularLocation>
</comment>
<comment type="similarity">
    <text evidence="3">Belongs to the TrbL/VirB6 family.</text>
</comment>
<feature type="signal peptide" evidence="1">
    <location>
        <begin position="1"/>
        <end position="24"/>
    </location>
</feature>
<feature type="chain" id="PRO_0000269213" description="Uncharacterized protein RC0144">
    <location>
        <begin position="25"/>
        <end position="966"/>
    </location>
</feature>
<feature type="transmembrane region" description="Helical" evidence="1">
    <location>
        <begin position="601"/>
        <end position="621"/>
    </location>
</feature>
<feature type="transmembrane region" description="Helical" evidence="1">
    <location>
        <begin position="711"/>
        <end position="731"/>
    </location>
</feature>
<feature type="transmembrane region" description="Helical" evidence="1">
    <location>
        <begin position="743"/>
        <end position="763"/>
    </location>
</feature>
<feature type="transmembrane region" description="Helical" evidence="1">
    <location>
        <begin position="785"/>
        <end position="805"/>
    </location>
</feature>
<feature type="transmembrane region" description="Helical" evidence="1">
    <location>
        <begin position="822"/>
        <end position="842"/>
    </location>
</feature>
<feature type="transmembrane region" description="Helical" evidence="1">
    <location>
        <begin position="855"/>
        <end position="875"/>
    </location>
</feature>
<feature type="region of interest" description="Disordered" evidence="2">
    <location>
        <begin position="918"/>
        <end position="966"/>
    </location>
</feature>
<feature type="compositionally biased region" description="Basic and acidic residues" evidence="2">
    <location>
        <begin position="926"/>
        <end position="966"/>
    </location>
</feature>
<proteinExistence type="inferred from homology"/>
<organism>
    <name type="scientific">Rickettsia conorii (strain ATCC VR-613 / Malish 7)</name>
    <dbReference type="NCBI Taxonomy" id="272944"/>
    <lineage>
        <taxon>Bacteria</taxon>
        <taxon>Pseudomonadati</taxon>
        <taxon>Pseudomonadota</taxon>
        <taxon>Alphaproteobacteria</taxon>
        <taxon>Rickettsiales</taxon>
        <taxon>Rickettsiaceae</taxon>
        <taxon>Rickettsieae</taxon>
        <taxon>Rickettsia</taxon>
        <taxon>spotted fever group</taxon>
    </lineage>
</organism>
<evidence type="ECO:0000255" key="1"/>
<evidence type="ECO:0000256" key="2">
    <source>
        <dbReference type="SAM" id="MobiDB-lite"/>
    </source>
</evidence>
<evidence type="ECO:0000305" key="3"/>
<gene>
    <name type="ordered locus">RC0144</name>
</gene>
<sequence length="966" mass="107279">MQGNLLKVLGVLAIVATLVCFIFAALGMIGAVKVGDSCYMRYASDGQGGADSIIGTITLNANANYVNTAKMLSDGTTLLVPDPTRYGEWLNTQVLVENSQPVNLQVVGQVSLCLAYIPKDNLQRTGAGSNLDDNGQMIPIPRINDANNPPVSLIMDAKNNEWRNIAELYANDRVLVSVSPNFANTDATVKDAFKGAEVTQDCSENKTTYNPICGKYSVYSGEYVNACELKEKYWNCEVTWRCPTWHEQIGCDWGALGCVASCKKIPECTTKCMAWVNITRPAPENYLDDGSFTFSWSDNTGKLFIDYSALQCSYNANIPPVDKCPDRVRDRRIKDKDYIGGVHCTSGICSDGDFQKNRRFWYTADGKGGKGPTGLIYQMNDAGSVSQALPSKLEFAKFVADTDQPPDYKGKDGKYLYKVIYNIPFNSNIAKSYLQYRLWSPTSQDSSKNTGGYVLNIKQTKCYRENGNSFNDTFDDRGRVQYIIVKPSENPNTSGKTYSPQGISVDSEGKYSFNANEAGYIWMKILNDPGNNLRDYKDSEGSYKVHFSTSLKVGSFTIKVMNPLLQLFKTKVQGAATSIFKNMVCYKANDSSSCTNFFTYIKAILILYVMTYGAMFLLGFAKINQKELVIRIAKIGVVSGLMNGNTFEFFNNYLFDAITNFSDSIIANMSGYSLFTSTNTISNPFMFLDAVMSKIFFSQTFIAQLLALLSLGLSGIIYFIITFIAVCIVIITALRAVAVYIMAFMATCILIGIAPLFISFLLFDFTRYLFDNWVRFTIRYMMEPVVMMAGIIVLTQLFTIYLDFVLGYSVCWKCALPIKIPFIGTILPIALLNVPIFCINWFAPWGMDYMSGMMGVNMQNIVALVIIAYGMYGYVEFSGRIVVKLTSAVGPSATEIGGKMSHDAGQKVLSSIGMDDKTRQGITGRAEARLKQRNKTLDQAEKNRKNTQKEGGEKTNEEPPKPETPK</sequence>
<dbReference type="EMBL" id="AE006914">
    <property type="protein sequence ID" value="AAL02682.1"/>
    <property type="molecule type" value="Genomic_DNA"/>
</dbReference>
<dbReference type="PIR" id="H97717">
    <property type="entry name" value="H97717"/>
</dbReference>
<dbReference type="RefSeq" id="WP_010976821.1">
    <property type="nucleotide sequence ID" value="NC_003103.1"/>
</dbReference>
<dbReference type="SMR" id="Q92JC3"/>
<dbReference type="GeneID" id="928050"/>
<dbReference type="KEGG" id="rco:RC0144"/>
<dbReference type="PATRIC" id="fig|272944.4.peg.168"/>
<dbReference type="HOGENOM" id="CLU_304399_0_0_5"/>
<dbReference type="Proteomes" id="UP000000816">
    <property type="component" value="Chromosome"/>
</dbReference>
<dbReference type="GO" id="GO:0005886">
    <property type="term" value="C:plasma membrane"/>
    <property type="evidence" value="ECO:0007669"/>
    <property type="project" value="UniProtKB-SubCell"/>
</dbReference>
<dbReference type="GO" id="GO:0030255">
    <property type="term" value="P:protein secretion by the type IV secretion system"/>
    <property type="evidence" value="ECO:0007669"/>
    <property type="project" value="InterPro"/>
</dbReference>
<dbReference type="InterPro" id="IPR007688">
    <property type="entry name" value="Conjugal_tfr_TrbL/VirB6"/>
</dbReference>
<dbReference type="Pfam" id="PF04610">
    <property type="entry name" value="TrbL"/>
    <property type="match status" value="1"/>
</dbReference>
<accession>Q92JC3</accession>